<proteinExistence type="inferred from homology"/>
<dbReference type="EC" id="2.7.1.33" evidence="1"/>
<dbReference type="EMBL" id="CP001661">
    <property type="protein sequence ID" value="ACT17957.1"/>
    <property type="molecule type" value="Genomic_DNA"/>
</dbReference>
<dbReference type="SMR" id="C6E791"/>
<dbReference type="STRING" id="443144.GM21_1904"/>
<dbReference type="KEGG" id="gem:GM21_1904"/>
<dbReference type="eggNOG" id="COG1521">
    <property type="taxonomic scope" value="Bacteria"/>
</dbReference>
<dbReference type="HOGENOM" id="CLU_066627_1_0_7"/>
<dbReference type="OrthoDB" id="9804707at2"/>
<dbReference type="UniPathway" id="UPA00241">
    <property type="reaction ID" value="UER00352"/>
</dbReference>
<dbReference type="GO" id="GO:0005737">
    <property type="term" value="C:cytoplasm"/>
    <property type="evidence" value="ECO:0007669"/>
    <property type="project" value="UniProtKB-SubCell"/>
</dbReference>
<dbReference type="GO" id="GO:0005524">
    <property type="term" value="F:ATP binding"/>
    <property type="evidence" value="ECO:0007669"/>
    <property type="project" value="UniProtKB-UniRule"/>
</dbReference>
<dbReference type="GO" id="GO:0046872">
    <property type="term" value="F:metal ion binding"/>
    <property type="evidence" value="ECO:0007669"/>
    <property type="project" value="UniProtKB-KW"/>
</dbReference>
<dbReference type="GO" id="GO:0004594">
    <property type="term" value="F:pantothenate kinase activity"/>
    <property type="evidence" value="ECO:0007669"/>
    <property type="project" value="UniProtKB-UniRule"/>
</dbReference>
<dbReference type="GO" id="GO:0015937">
    <property type="term" value="P:coenzyme A biosynthetic process"/>
    <property type="evidence" value="ECO:0007669"/>
    <property type="project" value="UniProtKB-UniRule"/>
</dbReference>
<dbReference type="CDD" id="cd24015">
    <property type="entry name" value="ASKHA_NBD_PanK-III"/>
    <property type="match status" value="1"/>
</dbReference>
<dbReference type="Gene3D" id="3.30.420.40">
    <property type="match status" value="2"/>
</dbReference>
<dbReference type="HAMAP" id="MF_01274">
    <property type="entry name" value="Pantothen_kinase_3"/>
    <property type="match status" value="1"/>
</dbReference>
<dbReference type="InterPro" id="IPR043129">
    <property type="entry name" value="ATPase_NBD"/>
</dbReference>
<dbReference type="InterPro" id="IPR004619">
    <property type="entry name" value="Type_III_PanK"/>
</dbReference>
<dbReference type="NCBIfam" id="TIGR00671">
    <property type="entry name" value="baf"/>
    <property type="match status" value="1"/>
</dbReference>
<dbReference type="NCBIfam" id="NF009847">
    <property type="entry name" value="PRK13318.1-5"/>
    <property type="match status" value="1"/>
</dbReference>
<dbReference type="NCBIfam" id="NF009848">
    <property type="entry name" value="PRK13318.1-6"/>
    <property type="match status" value="1"/>
</dbReference>
<dbReference type="NCBIfam" id="NF009855">
    <property type="entry name" value="PRK13321.1"/>
    <property type="match status" value="1"/>
</dbReference>
<dbReference type="PANTHER" id="PTHR34265">
    <property type="entry name" value="TYPE III PANTOTHENATE KINASE"/>
    <property type="match status" value="1"/>
</dbReference>
<dbReference type="PANTHER" id="PTHR34265:SF1">
    <property type="entry name" value="TYPE III PANTOTHENATE KINASE"/>
    <property type="match status" value="1"/>
</dbReference>
<dbReference type="Pfam" id="PF03309">
    <property type="entry name" value="Pan_kinase"/>
    <property type="match status" value="1"/>
</dbReference>
<dbReference type="SUPFAM" id="SSF53067">
    <property type="entry name" value="Actin-like ATPase domain"/>
    <property type="match status" value="2"/>
</dbReference>
<reference key="1">
    <citation type="submission" date="2009-07" db="EMBL/GenBank/DDBJ databases">
        <title>Complete sequence of Geobacter sp. M21.</title>
        <authorList>
            <consortium name="US DOE Joint Genome Institute"/>
            <person name="Lucas S."/>
            <person name="Copeland A."/>
            <person name="Lapidus A."/>
            <person name="Glavina del Rio T."/>
            <person name="Dalin E."/>
            <person name="Tice H."/>
            <person name="Bruce D."/>
            <person name="Goodwin L."/>
            <person name="Pitluck S."/>
            <person name="Saunders E."/>
            <person name="Brettin T."/>
            <person name="Detter J.C."/>
            <person name="Han C."/>
            <person name="Larimer F."/>
            <person name="Land M."/>
            <person name="Hauser L."/>
            <person name="Kyrpides N."/>
            <person name="Ovchinnikova G."/>
            <person name="Lovley D."/>
        </authorList>
    </citation>
    <scope>NUCLEOTIDE SEQUENCE [LARGE SCALE GENOMIC DNA]</scope>
    <source>
        <strain>M21</strain>
    </source>
</reference>
<name>COAX_GEOSM</name>
<accession>C6E791</accession>
<keyword id="KW-0067">ATP-binding</keyword>
<keyword id="KW-0173">Coenzyme A biosynthesis</keyword>
<keyword id="KW-0963">Cytoplasm</keyword>
<keyword id="KW-0418">Kinase</keyword>
<keyword id="KW-0479">Metal-binding</keyword>
<keyword id="KW-0547">Nucleotide-binding</keyword>
<keyword id="KW-0630">Potassium</keyword>
<keyword id="KW-0808">Transferase</keyword>
<feature type="chain" id="PRO_1000214189" description="Type III pantothenate kinase">
    <location>
        <begin position="1"/>
        <end position="254"/>
    </location>
</feature>
<feature type="active site" description="Proton acceptor" evidence="1">
    <location>
        <position position="109"/>
    </location>
</feature>
<feature type="binding site" evidence="1">
    <location>
        <begin position="6"/>
        <end position="13"/>
    </location>
    <ligand>
        <name>ATP</name>
        <dbReference type="ChEBI" id="CHEBI:30616"/>
    </ligand>
</feature>
<feature type="binding site" evidence="1">
    <location>
        <position position="100"/>
    </location>
    <ligand>
        <name>substrate</name>
    </ligand>
</feature>
<feature type="binding site" evidence="1">
    <location>
        <begin position="107"/>
        <end position="110"/>
    </location>
    <ligand>
        <name>substrate</name>
    </ligand>
</feature>
<feature type="binding site" evidence="1">
    <location>
        <position position="129"/>
    </location>
    <ligand>
        <name>K(+)</name>
        <dbReference type="ChEBI" id="CHEBI:29103"/>
    </ligand>
</feature>
<feature type="binding site" evidence="1">
    <location>
        <position position="132"/>
    </location>
    <ligand>
        <name>ATP</name>
        <dbReference type="ChEBI" id="CHEBI:30616"/>
    </ligand>
</feature>
<feature type="binding site" evidence="1">
    <location>
        <position position="184"/>
    </location>
    <ligand>
        <name>substrate</name>
    </ligand>
</feature>
<organism>
    <name type="scientific">Geobacter sp. (strain M21)</name>
    <dbReference type="NCBI Taxonomy" id="443144"/>
    <lineage>
        <taxon>Bacteria</taxon>
        <taxon>Pseudomonadati</taxon>
        <taxon>Thermodesulfobacteriota</taxon>
        <taxon>Desulfuromonadia</taxon>
        <taxon>Geobacterales</taxon>
        <taxon>Geobacteraceae</taxon>
        <taxon>Geobacter</taxon>
    </lineage>
</organism>
<sequence>MLLVIDVGNSNIVLGIYDEERLVRDWRVSTDKSKTIDEYGILFHDLFRLADIVFTDVKDIIISSVVPTLTGVLEKLSRQYFKISPYVVGPGIKTGMPIHYDNPKEVGADRIVNAIAGFEKYRTALIIVDFGTATTFDYVNKKGEYCGGAIAPGLAISMEALFMKASKLPRVDIARPPSIIAKNTVNSMQAGIFFGYVGLVDGIVQRMKGEGKENPKVIATGGLASLIAPESVTIEEVDEFLTLEGLRIIHQRNK</sequence>
<evidence type="ECO:0000255" key="1">
    <source>
        <dbReference type="HAMAP-Rule" id="MF_01274"/>
    </source>
</evidence>
<protein>
    <recommendedName>
        <fullName evidence="1">Type III pantothenate kinase</fullName>
        <ecNumber evidence="1">2.7.1.33</ecNumber>
    </recommendedName>
    <alternativeName>
        <fullName evidence="1">PanK-III</fullName>
    </alternativeName>
    <alternativeName>
        <fullName evidence="1">Pantothenic acid kinase</fullName>
    </alternativeName>
</protein>
<gene>
    <name evidence="1" type="primary">coaX</name>
    <name type="ordered locus">GM21_1904</name>
</gene>
<comment type="function">
    <text evidence="1">Catalyzes the phosphorylation of pantothenate (Pan), the first step in CoA biosynthesis.</text>
</comment>
<comment type="catalytic activity">
    <reaction evidence="1">
        <text>(R)-pantothenate + ATP = (R)-4'-phosphopantothenate + ADP + H(+)</text>
        <dbReference type="Rhea" id="RHEA:16373"/>
        <dbReference type="ChEBI" id="CHEBI:10986"/>
        <dbReference type="ChEBI" id="CHEBI:15378"/>
        <dbReference type="ChEBI" id="CHEBI:29032"/>
        <dbReference type="ChEBI" id="CHEBI:30616"/>
        <dbReference type="ChEBI" id="CHEBI:456216"/>
        <dbReference type="EC" id="2.7.1.33"/>
    </reaction>
</comment>
<comment type="cofactor">
    <cofactor evidence="1">
        <name>NH4(+)</name>
        <dbReference type="ChEBI" id="CHEBI:28938"/>
    </cofactor>
    <cofactor evidence="1">
        <name>K(+)</name>
        <dbReference type="ChEBI" id="CHEBI:29103"/>
    </cofactor>
    <text evidence="1">A monovalent cation. Ammonium or potassium.</text>
</comment>
<comment type="pathway">
    <text evidence="1">Cofactor biosynthesis; coenzyme A biosynthesis; CoA from (R)-pantothenate: step 1/5.</text>
</comment>
<comment type="subunit">
    <text evidence="1">Homodimer.</text>
</comment>
<comment type="subcellular location">
    <subcellularLocation>
        <location evidence="1">Cytoplasm</location>
    </subcellularLocation>
</comment>
<comment type="similarity">
    <text evidence="1">Belongs to the type III pantothenate kinase family.</text>
</comment>